<organism>
    <name type="scientific">Dictyostelium discoideum</name>
    <name type="common">Social amoeba</name>
    <dbReference type="NCBI Taxonomy" id="44689"/>
    <lineage>
        <taxon>Eukaryota</taxon>
        <taxon>Amoebozoa</taxon>
        <taxon>Evosea</taxon>
        <taxon>Eumycetozoa</taxon>
        <taxon>Dictyostelia</taxon>
        <taxon>Dictyosteliales</taxon>
        <taxon>Dictyosteliaceae</taxon>
        <taxon>Dictyostelium</taxon>
    </lineage>
</organism>
<sequence length="1331" mass="147443">METSSNSSGSSSSPPSQHQQQQQQNSQLNLSSQSCFSNNSSSAADFNNYMESKLSEENNYYKNFNSNLDRGDSFKLEKESIKDTIKDNIKEDKICNDNNNSSSSSSSSSSGNNNNNIKDGRAPSPITTQQISPNKLILNTTKAITKPTPILNTQQTPTTTATTNTSTSTTNSTPSKFKKIKNSTINPTIEFISKPSLSVMFGFSPIYFVESIFIVLLIYILSNFVLKETSVYVISIFVIYFVIYFDNRYQIINKLSKSSINDSDSSSNNNNNNNNTTTTNNDSASTKGNNNNEISSPETYQKDVKSKINFYEHVNISSTNLNNVNTTSNTPITNPSNVNQPSNITTATTATTTSTNNNNNVNNSINNNNNNNNNNNNNNNNNNNNNNNNNNNNNNNNNNNNGNNNGNNNGNNNNILSKENSTNSLLNNLILNNTSVGKTHNRSSSGSDSIQPPPLPTGGSSHNIFYSAFPTHPYTDIDQSSTYRTRTFGSSSINNRKSLPPEYYNQYLNFLAHSNNNNNNNNSNTNNNNNNQSVSAPVSQLATPVYQTPGTNSVVGNLENDNENNNDSFSDINDNNSVVGNDFEQDDQILQNNGISTTTSTIVPTNDETKQELSQLENSNKVRSTVSKFIKLSTGVEEKLDWAIAQQCTLQPPRSSHSVTVYGSSLVLIGGEGITGENLVQFIDVERNLFISPKVTGGKVGPESIYNHDYCRIGNKFYLFGGYVAGKLSNKLYVLTIMDDSTVHWSSPRISGGCIPSPRYGHTFTRYGNRFLLFGGYDGEQCLNDLYILEPETMCWSTVTNIKGGQTPSERFGHTSTILGEKLIIFGGKGINNNNNNNNNNNNNNNNNNNNNNNNNNNNNKGLVELNDTHILLLNEIDSSFQWQVASFHQVSEIPSERSFHSATRVGRNIVMVGGKKDDSNGNPIALRDCWVLSYRMQWSKVSGVQFSPPRYNFGLIKNGSKLFILGGKGNNNNINNNSSSGGNNSSSSSGNSNTIITNTTNTTNNNNNNNNNNNNNNNNNNNNNNNNNNNNNNNNNNNNNNNNLSILDDIWFVNTVTLPISSSVTMINYSDIKIDKEIGKGHFSKVLKGNWKGKDVAVKKLNSNKDKAREEMIQEFKAEVELLGSLQHPNLVTCYGYSLNPMCIVMEFLPSGNLFELIHSKPSEQQQSIKLDSTLILAIAFDIARGMQHLHTRNIIHRDLKSSNLLMDKHFNIKIADLGIARETSFTQTMTTIGTVAWTAPEILRHESYNQKADVYSYAIVLYELLTGEEPYQGIPPMNAGILVASKGLRPELPDNCDPNWKKLVVWCWSEDPNKRPSFEEITNYLTKTF</sequence>
<protein>
    <recommendedName>
        <fullName>Probable serine/threonine-protein kinase DDB_G0272254</fullName>
        <ecNumber>2.7.11.1</ecNumber>
    </recommendedName>
</protein>
<reference key="1">
    <citation type="journal article" date="2002" name="Nature">
        <title>Sequence and analysis of chromosome 2 of Dictyostelium discoideum.</title>
        <authorList>
            <person name="Gloeckner G."/>
            <person name="Eichinger L."/>
            <person name="Szafranski K."/>
            <person name="Pachebat J.A."/>
            <person name="Bankier A.T."/>
            <person name="Dear P.H."/>
            <person name="Lehmann R."/>
            <person name="Baumgart C."/>
            <person name="Parra G."/>
            <person name="Abril J.F."/>
            <person name="Guigo R."/>
            <person name="Kumpf K."/>
            <person name="Tunggal B."/>
            <person name="Cox E.C."/>
            <person name="Quail M.A."/>
            <person name="Platzer M."/>
            <person name="Rosenthal A."/>
            <person name="Noegel A.A."/>
        </authorList>
    </citation>
    <scope>NUCLEOTIDE SEQUENCE [LARGE SCALE GENOMIC DNA]</scope>
    <source>
        <strain>AX4</strain>
    </source>
</reference>
<reference key="2">
    <citation type="journal article" date="2005" name="Nature">
        <title>The genome of the social amoeba Dictyostelium discoideum.</title>
        <authorList>
            <person name="Eichinger L."/>
            <person name="Pachebat J.A."/>
            <person name="Gloeckner G."/>
            <person name="Rajandream M.A."/>
            <person name="Sucgang R."/>
            <person name="Berriman M."/>
            <person name="Song J."/>
            <person name="Olsen R."/>
            <person name="Szafranski K."/>
            <person name="Xu Q."/>
            <person name="Tunggal B."/>
            <person name="Kummerfeld S."/>
            <person name="Madera M."/>
            <person name="Konfortov B.A."/>
            <person name="Rivero F."/>
            <person name="Bankier A.T."/>
            <person name="Lehmann R."/>
            <person name="Hamlin N."/>
            <person name="Davies R."/>
            <person name="Gaudet P."/>
            <person name="Fey P."/>
            <person name="Pilcher K."/>
            <person name="Chen G."/>
            <person name="Saunders D."/>
            <person name="Sodergren E.J."/>
            <person name="Davis P."/>
            <person name="Kerhornou A."/>
            <person name="Nie X."/>
            <person name="Hall N."/>
            <person name="Anjard C."/>
            <person name="Hemphill L."/>
            <person name="Bason N."/>
            <person name="Farbrother P."/>
            <person name="Desany B."/>
            <person name="Just E."/>
            <person name="Morio T."/>
            <person name="Rost R."/>
            <person name="Churcher C.M."/>
            <person name="Cooper J."/>
            <person name="Haydock S."/>
            <person name="van Driessche N."/>
            <person name="Cronin A."/>
            <person name="Goodhead I."/>
            <person name="Muzny D.M."/>
            <person name="Mourier T."/>
            <person name="Pain A."/>
            <person name="Lu M."/>
            <person name="Harper D."/>
            <person name="Lindsay R."/>
            <person name="Hauser H."/>
            <person name="James K.D."/>
            <person name="Quiles M."/>
            <person name="Madan Babu M."/>
            <person name="Saito T."/>
            <person name="Buchrieser C."/>
            <person name="Wardroper A."/>
            <person name="Felder M."/>
            <person name="Thangavelu M."/>
            <person name="Johnson D."/>
            <person name="Knights A."/>
            <person name="Loulseged H."/>
            <person name="Mungall K.L."/>
            <person name="Oliver K."/>
            <person name="Price C."/>
            <person name="Quail M.A."/>
            <person name="Urushihara H."/>
            <person name="Hernandez J."/>
            <person name="Rabbinowitsch E."/>
            <person name="Steffen D."/>
            <person name="Sanders M."/>
            <person name="Ma J."/>
            <person name="Kohara Y."/>
            <person name="Sharp S."/>
            <person name="Simmonds M.N."/>
            <person name="Spiegler S."/>
            <person name="Tivey A."/>
            <person name="Sugano S."/>
            <person name="White B."/>
            <person name="Walker D."/>
            <person name="Woodward J.R."/>
            <person name="Winckler T."/>
            <person name="Tanaka Y."/>
            <person name="Shaulsky G."/>
            <person name="Schleicher M."/>
            <person name="Weinstock G.M."/>
            <person name="Rosenthal A."/>
            <person name="Cox E.C."/>
            <person name="Chisholm R.L."/>
            <person name="Gibbs R.A."/>
            <person name="Loomis W.F."/>
            <person name="Platzer M."/>
            <person name="Kay R.R."/>
            <person name="Williams J.G."/>
            <person name="Dear P.H."/>
            <person name="Noegel A.A."/>
            <person name="Barrell B.G."/>
            <person name="Kuspa A."/>
        </authorList>
    </citation>
    <scope>NUCLEOTIDE SEQUENCE [LARGE SCALE GENOMIC DNA]</scope>
    <source>
        <strain>AX4</strain>
    </source>
</reference>
<accession>Q55A09</accession>
<accession>Q8MMX0</accession>
<keyword id="KW-0067">ATP-binding</keyword>
<keyword id="KW-0880">Kelch repeat</keyword>
<keyword id="KW-0418">Kinase</keyword>
<keyword id="KW-0472">Membrane</keyword>
<keyword id="KW-0547">Nucleotide-binding</keyword>
<keyword id="KW-1185">Reference proteome</keyword>
<keyword id="KW-0677">Repeat</keyword>
<keyword id="KW-0723">Serine/threonine-protein kinase</keyword>
<keyword id="KW-0808">Transferase</keyword>
<keyword id="KW-0812">Transmembrane</keyword>
<keyword id="KW-1133">Transmembrane helix</keyword>
<name>Y9963_DICDI</name>
<feature type="chain" id="PRO_0000355170" description="Probable serine/threonine-protein kinase DDB_G0272254">
    <location>
        <begin position="1"/>
        <end position="1331"/>
    </location>
</feature>
<feature type="transmembrane region" description="Helical" evidence="1">
    <location>
        <begin position="201"/>
        <end position="221"/>
    </location>
</feature>
<feature type="transmembrane region" description="Helical" evidence="1">
    <location>
        <begin position="224"/>
        <end position="244"/>
    </location>
</feature>
<feature type="repeat" description="Kelch 1">
    <location>
        <begin position="665"/>
        <end position="710"/>
    </location>
</feature>
<feature type="repeat" description="Kelch 2">
    <location>
        <begin position="716"/>
        <end position="769"/>
    </location>
</feature>
<feature type="repeat" description="Kelch 3">
    <location>
        <begin position="770"/>
        <end position="816"/>
    </location>
</feature>
<feature type="repeat" description="Kelch 4">
    <location>
        <begin position="822"/>
        <end position="868"/>
    </location>
</feature>
<feature type="repeat" description="Kelch 5">
    <location>
        <begin position="909"/>
        <end position="959"/>
    </location>
</feature>
<feature type="repeat" description="Kelch 6">
    <location>
        <begin position="962"/>
        <end position="1008"/>
    </location>
</feature>
<feature type="domain" description="Protein kinase" evidence="2">
    <location>
        <begin position="1073"/>
        <end position="1331"/>
    </location>
</feature>
<feature type="region of interest" description="Disordered" evidence="4">
    <location>
        <begin position="1"/>
        <end position="43"/>
    </location>
</feature>
<feature type="region of interest" description="Disordered" evidence="4">
    <location>
        <begin position="92"/>
        <end position="132"/>
    </location>
</feature>
<feature type="region of interest" description="Disordered" evidence="4">
    <location>
        <begin position="150"/>
        <end position="175"/>
    </location>
</feature>
<feature type="region of interest" description="Disordered" evidence="4">
    <location>
        <begin position="259"/>
        <end position="300"/>
    </location>
</feature>
<feature type="region of interest" description="Disordered" evidence="4">
    <location>
        <begin position="320"/>
        <end position="419"/>
    </location>
</feature>
<feature type="region of interest" description="Disordered" evidence="4">
    <location>
        <begin position="435"/>
        <end position="464"/>
    </location>
</feature>
<feature type="region of interest" description="Disordered" evidence="4">
    <location>
        <begin position="512"/>
        <end position="581"/>
    </location>
</feature>
<feature type="region of interest" description="Disordered" evidence="4">
    <location>
        <begin position="834"/>
        <end position="862"/>
    </location>
</feature>
<feature type="region of interest" description="Disordered" evidence="4">
    <location>
        <begin position="976"/>
        <end position="1042"/>
    </location>
</feature>
<feature type="compositionally biased region" description="Low complexity" evidence="4">
    <location>
        <begin position="1"/>
        <end position="42"/>
    </location>
</feature>
<feature type="compositionally biased region" description="Low complexity" evidence="4">
    <location>
        <begin position="96"/>
        <end position="116"/>
    </location>
</feature>
<feature type="compositionally biased region" description="Low complexity" evidence="4">
    <location>
        <begin position="153"/>
        <end position="175"/>
    </location>
</feature>
<feature type="compositionally biased region" description="Low complexity" evidence="4">
    <location>
        <begin position="259"/>
        <end position="287"/>
    </location>
</feature>
<feature type="compositionally biased region" description="Polar residues" evidence="4">
    <location>
        <begin position="288"/>
        <end position="299"/>
    </location>
</feature>
<feature type="compositionally biased region" description="Polar residues" evidence="4">
    <location>
        <begin position="436"/>
        <end position="450"/>
    </location>
</feature>
<feature type="compositionally biased region" description="Low complexity" evidence="4">
    <location>
        <begin position="514"/>
        <end position="531"/>
    </location>
</feature>
<feature type="compositionally biased region" description="Polar residues" evidence="4">
    <location>
        <begin position="532"/>
        <end position="555"/>
    </location>
</feature>
<feature type="compositionally biased region" description="Low complexity" evidence="4">
    <location>
        <begin position="557"/>
        <end position="577"/>
    </location>
</feature>
<feature type="compositionally biased region" description="Low complexity" evidence="4">
    <location>
        <begin position="834"/>
        <end position="860"/>
    </location>
</feature>
<feature type="active site" description="Proton acceptor" evidence="2 3">
    <location>
        <position position="1200"/>
    </location>
</feature>
<feature type="binding site" evidence="2">
    <location>
        <begin position="1079"/>
        <end position="1087"/>
    </location>
    <ligand>
        <name>ATP</name>
        <dbReference type="ChEBI" id="CHEBI:30616"/>
    </ligand>
</feature>
<feature type="binding site" evidence="2">
    <location>
        <position position="1100"/>
    </location>
    <ligand>
        <name>ATP</name>
        <dbReference type="ChEBI" id="CHEBI:30616"/>
    </ligand>
</feature>
<gene>
    <name type="ORF">DDB_G0272254</name>
</gene>
<evidence type="ECO:0000255" key="1"/>
<evidence type="ECO:0000255" key="2">
    <source>
        <dbReference type="PROSITE-ProRule" id="PRU00159"/>
    </source>
</evidence>
<evidence type="ECO:0000255" key="3">
    <source>
        <dbReference type="PROSITE-ProRule" id="PRU10027"/>
    </source>
</evidence>
<evidence type="ECO:0000256" key="4">
    <source>
        <dbReference type="SAM" id="MobiDB-lite"/>
    </source>
</evidence>
<evidence type="ECO:0000305" key="5"/>
<dbReference type="EC" id="2.7.11.1"/>
<dbReference type="EMBL" id="AAFI02000008">
    <property type="protein sequence ID" value="EAL71279.1"/>
    <property type="molecule type" value="Genomic_DNA"/>
</dbReference>
<dbReference type="RefSeq" id="XP_645175.1">
    <property type="nucleotide sequence ID" value="XM_640083.1"/>
</dbReference>
<dbReference type="SMR" id="Q55A09"/>
<dbReference type="STRING" id="44689.Q55A09"/>
<dbReference type="PaxDb" id="44689-DDB0229963"/>
<dbReference type="EnsemblProtists" id="EAL71279">
    <property type="protein sequence ID" value="EAL71279"/>
    <property type="gene ID" value="DDB_G0272254"/>
</dbReference>
<dbReference type="GeneID" id="8618347"/>
<dbReference type="KEGG" id="ddi:DDB_G0272254"/>
<dbReference type="dictyBase" id="DDB_G0272254"/>
<dbReference type="VEuPathDB" id="AmoebaDB:DDB_G0272254"/>
<dbReference type="eggNOG" id="KOG0192">
    <property type="taxonomic scope" value="Eukaryota"/>
</dbReference>
<dbReference type="HOGENOM" id="CLU_259076_0_0_1"/>
<dbReference type="InParanoid" id="Q55A09"/>
<dbReference type="OMA" id="CINDIQR"/>
<dbReference type="Reactome" id="R-DDI-5675482">
    <property type="pathway name" value="Regulation of necroptotic cell death"/>
</dbReference>
<dbReference type="PRO" id="PR:Q55A09"/>
<dbReference type="Proteomes" id="UP000002195">
    <property type="component" value="Chromosome 2"/>
</dbReference>
<dbReference type="GO" id="GO:0005737">
    <property type="term" value="C:cytoplasm"/>
    <property type="evidence" value="ECO:0000318"/>
    <property type="project" value="GO_Central"/>
</dbReference>
<dbReference type="GO" id="GO:0016020">
    <property type="term" value="C:membrane"/>
    <property type="evidence" value="ECO:0007669"/>
    <property type="project" value="UniProtKB-SubCell"/>
</dbReference>
<dbReference type="GO" id="GO:0005524">
    <property type="term" value="F:ATP binding"/>
    <property type="evidence" value="ECO:0007669"/>
    <property type="project" value="UniProtKB-KW"/>
</dbReference>
<dbReference type="GO" id="GO:0004672">
    <property type="term" value="F:protein kinase activity"/>
    <property type="evidence" value="ECO:0000318"/>
    <property type="project" value="GO_Central"/>
</dbReference>
<dbReference type="GO" id="GO:0106310">
    <property type="term" value="F:protein serine kinase activity"/>
    <property type="evidence" value="ECO:0007669"/>
    <property type="project" value="RHEA"/>
</dbReference>
<dbReference type="GO" id="GO:0004674">
    <property type="term" value="F:protein serine/threonine kinase activity"/>
    <property type="evidence" value="ECO:0007669"/>
    <property type="project" value="UniProtKB-KW"/>
</dbReference>
<dbReference type="GO" id="GO:0007165">
    <property type="term" value="P:signal transduction"/>
    <property type="evidence" value="ECO:0000318"/>
    <property type="project" value="GO_Central"/>
</dbReference>
<dbReference type="CDD" id="cd13999">
    <property type="entry name" value="STKc_MAP3K-like"/>
    <property type="match status" value="1"/>
</dbReference>
<dbReference type="FunFam" id="3.30.200.20:FF:000180">
    <property type="entry name" value="serine/threonine-protein kinase STY46-like"/>
    <property type="match status" value="1"/>
</dbReference>
<dbReference type="Gene3D" id="2.120.10.80">
    <property type="entry name" value="Kelch-type beta propeller"/>
    <property type="match status" value="2"/>
</dbReference>
<dbReference type="Gene3D" id="3.30.200.20">
    <property type="entry name" value="Phosphorylase Kinase, domain 1"/>
    <property type="match status" value="1"/>
</dbReference>
<dbReference type="Gene3D" id="1.10.510.10">
    <property type="entry name" value="Transferase(Phosphotransferase) domain 1"/>
    <property type="match status" value="1"/>
</dbReference>
<dbReference type="InterPro" id="IPR015915">
    <property type="entry name" value="Kelch-typ_b-propeller"/>
</dbReference>
<dbReference type="InterPro" id="IPR011009">
    <property type="entry name" value="Kinase-like_dom_sf"/>
</dbReference>
<dbReference type="InterPro" id="IPR000719">
    <property type="entry name" value="Prot_kinase_dom"/>
</dbReference>
<dbReference type="InterPro" id="IPR017441">
    <property type="entry name" value="Protein_kinase_ATP_BS"/>
</dbReference>
<dbReference type="InterPro" id="IPR001245">
    <property type="entry name" value="Ser-Thr/Tyr_kinase_cat_dom"/>
</dbReference>
<dbReference type="InterPro" id="IPR008271">
    <property type="entry name" value="Ser/Thr_kinase_AS"/>
</dbReference>
<dbReference type="InterPro" id="IPR051681">
    <property type="entry name" value="Ser/Thr_Kinases-Pseudokinases"/>
</dbReference>
<dbReference type="PANTHER" id="PTHR44329">
    <property type="entry name" value="SERINE/THREONINE-PROTEIN KINASE TNNI3K-RELATED"/>
    <property type="match status" value="1"/>
</dbReference>
<dbReference type="Pfam" id="PF24681">
    <property type="entry name" value="Kelch_KLHDC2_KLHL20_DRC7"/>
    <property type="match status" value="1"/>
</dbReference>
<dbReference type="Pfam" id="PF07714">
    <property type="entry name" value="PK_Tyr_Ser-Thr"/>
    <property type="match status" value="1"/>
</dbReference>
<dbReference type="PRINTS" id="PR00109">
    <property type="entry name" value="TYRKINASE"/>
</dbReference>
<dbReference type="SMART" id="SM00220">
    <property type="entry name" value="S_TKc"/>
    <property type="match status" value="1"/>
</dbReference>
<dbReference type="SUPFAM" id="SSF117281">
    <property type="entry name" value="Kelch motif"/>
    <property type="match status" value="2"/>
</dbReference>
<dbReference type="SUPFAM" id="SSF56112">
    <property type="entry name" value="Protein kinase-like (PK-like)"/>
    <property type="match status" value="1"/>
</dbReference>
<dbReference type="PROSITE" id="PS00107">
    <property type="entry name" value="PROTEIN_KINASE_ATP"/>
    <property type="match status" value="1"/>
</dbReference>
<dbReference type="PROSITE" id="PS50011">
    <property type="entry name" value="PROTEIN_KINASE_DOM"/>
    <property type="match status" value="1"/>
</dbReference>
<dbReference type="PROSITE" id="PS00108">
    <property type="entry name" value="PROTEIN_KINASE_ST"/>
    <property type="match status" value="1"/>
</dbReference>
<comment type="catalytic activity">
    <reaction>
        <text>L-seryl-[protein] + ATP = O-phospho-L-seryl-[protein] + ADP + H(+)</text>
        <dbReference type="Rhea" id="RHEA:17989"/>
        <dbReference type="Rhea" id="RHEA-COMP:9863"/>
        <dbReference type="Rhea" id="RHEA-COMP:11604"/>
        <dbReference type="ChEBI" id="CHEBI:15378"/>
        <dbReference type="ChEBI" id="CHEBI:29999"/>
        <dbReference type="ChEBI" id="CHEBI:30616"/>
        <dbReference type="ChEBI" id="CHEBI:83421"/>
        <dbReference type="ChEBI" id="CHEBI:456216"/>
        <dbReference type="EC" id="2.7.11.1"/>
    </reaction>
</comment>
<comment type="catalytic activity">
    <reaction>
        <text>L-threonyl-[protein] + ATP = O-phospho-L-threonyl-[protein] + ADP + H(+)</text>
        <dbReference type="Rhea" id="RHEA:46608"/>
        <dbReference type="Rhea" id="RHEA-COMP:11060"/>
        <dbReference type="Rhea" id="RHEA-COMP:11605"/>
        <dbReference type="ChEBI" id="CHEBI:15378"/>
        <dbReference type="ChEBI" id="CHEBI:30013"/>
        <dbReference type="ChEBI" id="CHEBI:30616"/>
        <dbReference type="ChEBI" id="CHEBI:61977"/>
        <dbReference type="ChEBI" id="CHEBI:456216"/>
        <dbReference type="EC" id="2.7.11.1"/>
    </reaction>
</comment>
<comment type="subcellular location">
    <subcellularLocation>
        <location evidence="5">Membrane</location>
        <topology evidence="5">Multi-pass membrane protein</topology>
    </subcellularLocation>
</comment>
<comment type="similarity">
    <text evidence="5">Belongs to the protein kinase superfamily. TKL Ser/Thr protein kinase family.</text>
</comment>
<proteinExistence type="inferred from homology"/>